<reference key="1">
    <citation type="journal article" date="1997" name="Nature">
        <title>The complete genome sequence of the hyperthermophilic, sulphate-reducing archaeon Archaeoglobus fulgidus.</title>
        <authorList>
            <person name="Klenk H.-P."/>
            <person name="Clayton R.A."/>
            <person name="Tomb J.-F."/>
            <person name="White O."/>
            <person name="Nelson K.E."/>
            <person name="Ketchum K.A."/>
            <person name="Dodson R.J."/>
            <person name="Gwinn M.L."/>
            <person name="Hickey E.K."/>
            <person name="Peterson J.D."/>
            <person name="Richardson D.L."/>
            <person name="Kerlavage A.R."/>
            <person name="Graham D.E."/>
            <person name="Kyrpides N.C."/>
            <person name="Fleischmann R.D."/>
            <person name="Quackenbush J."/>
            <person name="Lee N.H."/>
            <person name="Sutton G.G."/>
            <person name="Gill S.R."/>
            <person name="Kirkness E.F."/>
            <person name="Dougherty B.A."/>
            <person name="McKenney K."/>
            <person name="Adams M.D."/>
            <person name="Loftus B.J."/>
            <person name="Peterson S.N."/>
            <person name="Reich C.I."/>
            <person name="McNeil L.K."/>
            <person name="Badger J.H."/>
            <person name="Glodek A."/>
            <person name="Zhou L."/>
            <person name="Overbeek R."/>
            <person name="Gocayne J.D."/>
            <person name="Weidman J.F."/>
            <person name="McDonald L.A."/>
            <person name="Utterback T.R."/>
            <person name="Cotton M.D."/>
            <person name="Spriggs T."/>
            <person name="Artiach P."/>
            <person name="Kaine B.P."/>
            <person name="Sykes S.M."/>
            <person name="Sadow P.W."/>
            <person name="D'Andrea K.P."/>
            <person name="Bowman C."/>
            <person name="Fujii C."/>
            <person name="Garland S.A."/>
            <person name="Mason T.M."/>
            <person name="Olsen G.J."/>
            <person name="Fraser C.M."/>
            <person name="Smith H.O."/>
            <person name="Woese C.R."/>
            <person name="Venter J.C."/>
        </authorList>
    </citation>
    <scope>NUCLEOTIDE SEQUENCE [LARGE SCALE GENOMIC DNA]</scope>
    <source>
        <strain>ATCC 49558 / DSM 4304 / JCM 9628 / NBRC 100126 / VC-16</strain>
    </source>
</reference>
<protein>
    <recommendedName>
        <fullName>Probable flagellin 1</fullName>
    </recommendedName>
</protein>
<accession>O29208</accession>
<name>FLAB1_ARCFU</name>
<comment type="function">
    <text>Flagellin is the subunit protein which polymerizes to form the filaments of archaeal flagella.</text>
</comment>
<comment type="subcellular location">
    <subcellularLocation>
        <location>Archaeal flagellum</location>
    </subcellularLocation>
</comment>
<comment type="similarity">
    <text evidence="2">Belongs to the archaeal flagellin family.</text>
</comment>
<gene>
    <name type="primary">flaB1</name>
    <name type="ordered locus">AF_1054</name>
</gene>
<dbReference type="EMBL" id="AE000782">
    <property type="protein sequence ID" value="AAB90186.1"/>
    <property type="molecule type" value="Genomic_DNA"/>
</dbReference>
<dbReference type="PIR" id="F69381">
    <property type="entry name" value="F69381"/>
</dbReference>
<dbReference type="SMR" id="O29208"/>
<dbReference type="STRING" id="224325.AF_1054"/>
<dbReference type="PaxDb" id="224325-AF_1054"/>
<dbReference type="DNASU" id="1484277"/>
<dbReference type="EnsemblBacteria" id="AAB90186">
    <property type="protein sequence ID" value="AAB90186"/>
    <property type="gene ID" value="AF_1054"/>
</dbReference>
<dbReference type="KEGG" id="afu:AF_1054"/>
<dbReference type="eggNOG" id="arCOG01829">
    <property type="taxonomic scope" value="Archaea"/>
</dbReference>
<dbReference type="HOGENOM" id="CLU_084671_1_0_2"/>
<dbReference type="OrthoDB" id="50520at2157"/>
<dbReference type="PhylomeDB" id="O29208"/>
<dbReference type="Proteomes" id="UP000002199">
    <property type="component" value="Chromosome"/>
</dbReference>
<dbReference type="GO" id="GO:0097589">
    <property type="term" value="C:archaeal-type flagellum"/>
    <property type="evidence" value="ECO:0007669"/>
    <property type="project" value="UniProtKB-SubCell"/>
</dbReference>
<dbReference type="GO" id="GO:0005198">
    <property type="term" value="F:structural molecule activity"/>
    <property type="evidence" value="ECO:0007669"/>
    <property type="project" value="InterPro"/>
</dbReference>
<dbReference type="GO" id="GO:0097588">
    <property type="term" value="P:archaeal or bacterial-type flagellum-dependent cell motility"/>
    <property type="evidence" value="ECO:0007669"/>
    <property type="project" value="InterPro"/>
</dbReference>
<dbReference type="InterPro" id="IPR013373">
    <property type="entry name" value="Flagellin/pilin_N_arc"/>
</dbReference>
<dbReference type="InterPro" id="IPR002774">
    <property type="entry name" value="Flagellin_arc"/>
</dbReference>
<dbReference type="NCBIfam" id="TIGR02537">
    <property type="entry name" value="arch_flag_Nterm"/>
    <property type="match status" value="1"/>
</dbReference>
<dbReference type="PANTHER" id="PTHR35903">
    <property type="entry name" value="FLAGELLIN B1"/>
    <property type="match status" value="1"/>
</dbReference>
<dbReference type="PANTHER" id="PTHR35903:SF1">
    <property type="entry name" value="FLAGELLIN B1"/>
    <property type="match status" value="1"/>
</dbReference>
<dbReference type="Pfam" id="PF01917">
    <property type="entry name" value="Arch_flagellin"/>
    <property type="match status" value="1"/>
</dbReference>
<organism>
    <name type="scientific">Archaeoglobus fulgidus (strain ATCC 49558 / DSM 4304 / JCM 9628 / NBRC 100126 / VC-16)</name>
    <dbReference type="NCBI Taxonomy" id="224325"/>
    <lineage>
        <taxon>Archaea</taxon>
        <taxon>Methanobacteriati</taxon>
        <taxon>Methanobacteriota</taxon>
        <taxon>Archaeoglobi</taxon>
        <taxon>Archaeoglobales</taxon>
        <taxon>Archaeoglobaceae</taxon>
        <taxon>Archaeoglobus</taxon>
    </lineage>
</organism>
<feature type="propeptide" id="PRO_0000009359" evidence="1">
    <location>
        <begin position="1"/>
        <end position="11"/>
    </location>
</feature>
<feature type="chain" id="PRO_0000009360" description="Probable flagellin 1">
    <location>
        <begin position="12"/>
        <end position="203"/>
    </location>
</feature>
<evidence type="ECO:0000255" key="1"/>
<evidence type="ECO:0000305" key="2"/>
<keyword id="KW-0974">Archaeal flagellum</keyword>
<keyword id="KW-1185">Reference proteome</keyword>
<sequence length="203" mass="21865">MGMRFLKNEKGFTGLEAAIVLIAFVTVAAVFSYVLLGAGFFATQKGQETVHTGVKQATSSMELVGSIVAKGSTTNDNITEVTFTLQLAAGGQPIDLNKTVITVLVPKDGDFVELSYESNSSSLDKASEYYVNWIYSLQGSSPDNYLEEFEKAEVTVYLDSTGAGLDINPNDDFIIEVKPPIGATYPIELKAPPSIDSMMVLLK</sequence>
<proteinExistence type="inferred from homology"/>